<gene>
    <name type="primary">prrc1</name>
    <name type="ORF">TNeu113f01.1</name>
</gene>
<protein>
    <recommendedName>
        <fullName>Protein PRRC1</fullName>
    </recommendedName>
    <alternativeName>
        <fullName>Proline-rich and coiled-coil-containing protein 1</fullName>
    </alternativeName>
</protein>
<dbReference type="EMBL" id="CR926202">
    <property type="protein sequence ID" value="CAJ82347.1"/>
    <property type="molecule type" value="mRNA"/>
</dbReference>
<dbReference type="EMBL" id="BC061360">
    <property type="protein sequence ID" value="AAH61360.1"/>
    <property type="molecule type" value="mRNA"/>
</dbReference>
<dbReference type="RefSeq" id="NP_989046.1">
    <property type="nucleotide sequence ID" value="NM_203715.1"/>
</dbReference>
<dbReference type="SMR" id="Q6P870"/>
<dbReference type="FunCoup" id="Q6P870">
    <property type="interactions" value="1312"/>
</dbReference>
<dbReference type="PaxDb" id="8364-ENSXETP00000058783"/>
<dbReference type="DNASU" id="394643"/>
<dbReference type="GeneID" id="394643"/>
<dbReference type="KEGG" id="xtr:394643"/>
<dbReference type="AGR" id="Xenbase:XB-GENE-5777680"/>
<dbReference type="CTD" id="133619"/>
<dbReference type="Xenbase" id="XB-GENE-5777680">
    <property type="gene designation" value="prrc1"/>
</dbReference>
<dbReference type="eggNOG" id="ENOG502QUZV">
    <property type="taxonomic scope" value="Eukaryota"/>
</dbReference>
<dbReference type="HOGENOM" id="CLU_041959_0_0_1"/>
<dbReference type="InParanoid" id="Q6P870"/>
<dbReference type="OMA" id="ELFPDQW"/>
<dbReference type="OrthoDB" id="4968544at2759"/>
<dbReference type="PhylomeDB" id="Q6P870"/>
<dbReference type="Proteomes" id="UP000008143">
    <property type="component" value="Chromosome 1"/>
</dbReference>
<dbReference type="Bgee" id="ENSXETG00000027410">
    <property type="expression patterns" value="Expressed in neurula embryo and 14 other cell types or tissues"/>
</dbReference>
<dbReference type="ExpressionAtlas" id="Q6P870">
    <property type="expression patterns" value="baseline and differential"/>
</dbReference>
<dbReference type="GO" id="GO:0005737">
    <property type="term" value="C:cytoplasm"/>
    <property type="evidence" value="ECO:0000250"/>
    <property type="project" value="UniProtKB"/>
</dbReference>
<dbReference type="GO" id="GO:0005794">
    <property type="term" value="C:Golgi apparatus"/>
    <property type="evidence" value="ECO:0000250"/>
    <property type="project" value="UniProtKB"/>
</dbReference>
<dbReference type="GO" id="GO:0034237">
    <property type="term" value="F:protein kinase A regulatory subunit binding"/>
    <property type="evidence" value="ECO:0007669"/>
    <property type="project" value="Ensembl"/>
</dbReference>
<dbReference type="GO" id="GO:0010669">
    <property type="term" value="P:epithelial structure maintenance"/>
    <property type="evidence" value="ECO:0007669"/>
    <property type="project" value="Ensembl"/>
</dbReference>
<dbReference type="GO" id="GO:0001757">
    <property type="term" value="P:somite specification"/>
    <property type="evidence" value="ECO:0007669"/>
    <property type="project" value="Ensembl"/>
</dbReference>
<dbReference type="FunFam" id="3.90.950.10:FF:000006">
    <property type="entry name" value="PRRC1 isoform 1"/>
    <property type="match status" value="1"/>
</dbReference>
<dbReference type="Gene3D" id="3.90.950.10">
    <property type="match status" value="1"/>
</dbReference>
<dbReference type="InterPro" id="IPR029001">
    <property type="entry name" value="ITPase-like_fam"/>
</dbReference>
<dbReference type="InterPro" id="IPR026533">
    <property type="entry name" value="NTPase/PRRC1"/>
</dbReference>
<dbReference type="InterPro" id="IPR026534">
    <property type="entry name" value="PRRC1"/>
</dbReference>
<dbReference type="PANTHER" id="PTHR23276">
    <property type="entry name" value="PROTEIN PRRC1"/>
    <property type="match status" value="1"/>
</dbReference>
<dbReference type="PANTHER" id="PTHR23276:SF2">
    <property type="entry name" value="PROTEIN PRRC1"/>
    <property type="match status" value="1"/>
</dbReference>
<dbReference type="Pfam" id="PF01931">
    <property type="entry name" value="NTPase_I-T"/>
    <property type="match status" value="1"/>
</dbReference>
<dbReference type="SUPFAM" id="SSF52972">
    <property type="entry name" value="ITPase-like"/>
    <property type="match status" value="1"/>
</dbReference>
<organism>
    <name type="scientific">Xenopus tropicalis</name>
    <name type="common">Western clawed frog</name>
    <name type="synonym">Silurana tropicalis</name>
    <dbReference type="NCBI Taxonomy" id="8364"/>
    <lineage>
        <taxon>Eukaryota</taxon>
        <taxon>Metazoa</taxon>
        <taxon>Chordata</taxon>
        <taxon>Craniata</taxon>
        <taxon>Vertebrata</taxon>
        <taxon>Euteleostomi</taxon>
        <taxon>Amphibia</taxon>
        <taxon>Batrachia</taxon>
        <taxon>Anura</taxon>
        <taxon>Pipoidea</taxon>
        <taxon>Pipidae</taxon>
        <taxon>Xenopodinae</taxon>
        <taxon>Xenopus</taxon>
        <taxon>Silurana</taxon>
    </lineage>
</organism>
<sequence>MMEESGIETTPPSTPPPSTAGTSVAAATTAIATPIPPVLSSPLAAPAFSPLPSFAQPSFSTPVPSSVAPPRSSVPFTYASALPVTGVHSPPVNTSVPAAFSSPLPAFSSPSSFPPPPLNTTPGPVLSAPPMVPPVGGFSMSSTYDITKGHAGRAPQTPLMPTYSAAPVTVLPNPVTLQAPVAGSGSSITFPEEPEDPRVHTVHDEGSAGGIWGFIKGVAGNPMVKSVLDKTKHSVETVITTLDPGMASYIRTGGEMDIVVTSIKEVKVAAVRDAFQEVFGMAVVTGEDGQSNIAPQPVGYAAGLKGAQERIDSLRRSGMIHEKQPAVSVENFIAELLPDKWFDIGCVIVDDPVHGIRLEAFTQATPVPLEYVQQAQNFTPQDYNLRWSGLSVTVGEVLERSLAHVSRTDWHVAFTGMSRRQMIYSAAKALAGMYKQRLPPRIL</sequence>
<comment type="function">
    <text evidence="1">May act as a regulator of the protein kinase A (PKA) during embryonic development.</text>
</comment>
<comment type="subcellular location">
    <subcellularLocation>
        <location evidence="1">Golgi apparatus</location>
    </subcellularLocation>
    <subcellularLocation>
        <location evidence="1">Cytoplasm</location>
    </subcellularLocation>
</comment>
<comment type="similarity">
    <text evidence="3">Belongs to the PRRC1 family.</text>
</comment>
<keyword id="KW-0963">Cytoplasm</keyword>
<keyword id="KW-0333">Golgi apparatus</keyword>
<keyword id="KW-1185">Reference proteome</keyword>
<feature type="chain" id="PRO_0000307345" description="Protein PRRC1">
    <location>
        <begin position="1"/>
        <end position="443"/>
    </location>
</feature>
<feature type="region of interest" description="Disordered" evidence="2">
    <location>
        <begin position="1"/>
        <end position="25"/>
    </location>
</feature>
<feature type="region of interest" description="Disordered" evidence="2">
    <location>
        <begin position="106"/>
        <end position="129"/>
    </location>
</feature>
<accession>Q6P870</accession>
<reference key="1">
    <citation type="submission" date="2006-10" db="EMBL/GenBank/DDBJ databases">
        <authorList>
            <consortium name="Sanger Xenopus tropicalis EST/cDNA project"/>
        </authorList>
    </citation>
    <scope>NUCLEOTIDE SEQUENCE [LARGE SCALE MRNA]</scope>
    <source>
        <tissue>Neurula</tissue>
    </source>
</reference>
<reference key="2">
    <citation type="submission" date="2003-11" db="EMBL/GenBank/DDBJ databases">
        <authorList>
            <consortium name="NIH - Xenopus Gene Collection (XGC) project"/>
        </authorList>
    </citation>
    <scope>NUCLEOTIDE SEQUENCE [LARGE SCALE MRNA]</scope>
    <source>
        <tissue>Neurula</tissue>
    </source>
</reference>
<name>PRRC1_XENTR</name>
<proteinExistence type="evidence at transcript level"/>
<evidence type="ECO:0000250" key="1">
    <source>
        <dbReference type="UniProtKB" id="Q5XJA3"/>
    </source>
</evidence>
<evidence type="ECO:0000256" key="2">
    <source>
        <dbReference type="SAM" id="MobiDB-lite"/>
    </source>
</evidence>
<evidence type="ECO:0000305" key="3"/>